<keyword id="KW-0025">Alternative splicing</keyword>
<keyword id="KW-0134">Cell wall</keyword>
<keyword id="KW-0378">Hydrolase</keyword>
<keyword id="KW-1185">Reference proteome</keyword>
<keyword id="KW-0964">Secreted</keyword>
<keyword id="KW-0732">Signal</keyword>
<keyword id="KW-0926">Vacuole</keyword>
<evidence type="ECO:0000250" key="1"/>
<evidence type="ECO:0000255" key="2"/>
<evidence type="ECO:0000255" key="3">
    <source>
        <dbReference type="PROSITE-ProRule" id="PRU00607"/>
    </source>
</evidence>
<evidence type="ECO:0000269" key="4">
    <source>
    </source>
</evidence>
<evidence type="ECO:0000303" key="5">
    <source>
    </source>
</evidence>
<evidence type="ECO:0000303" key="6">
    <source ref="5"/>
</evidence>
<evidence type="ECO:0000305" key="7"/>
<evidence type="ECO:0000305" key="8">
    <source>
    </source>
</evidence>
<proteinExistence type="evidence at transcript level"/>
<feature type="signal peptide" evidence="2">
    <location>
        <begin position="1"/>
        <end position="23"/>
    </location>
</feature>
<feature type="chain" id="PRO_0000423721" description="Gamma-glutamyl hydrolase 1">
    <location>
        <begin position="24"/>
        <end position="348"/>
    </location>
</feature>
<feature type="domain" description="Gamma-glutamyl hydrolase" evidence="3">
    <location>
        <begin position="46"/>
        <end position="342"/>
    </location>
</feature>
<feature type="active site" description="Nucleophile" evidence="3">
    <location>
        <position position="156"/>
    </location>
</feature>
<feature type="active site" evidence="3">
    <location>
        <position position="269"/>
    </location>
</feature>
<feature type="splice variant" id="VSP_053262" description="In isoform 2." evidence="5 6">
    <original>IDNNCLYKEELNRNSYS</original>
    <variation>WRYICLPFFLLLWNDI</variation>
    <location>
        <begin position="2"/>
        <end position="18"/>
    </location>
</feature>
<name>GGH1_ARATH</name>
<organism>
    <name type="scientific">Arabidopsis thaliana</name>
    <name type="common">Mouse-ear cress</name>
    <dbReference type="NCBI Taxonomy" id="3702"/>
    <lineage>
        <taxon>Eukaryota</taxon>
        <taxon>Viridiplantae</taxon>
        <taxon>Streptophyta</taxon>
        <taxon>Embryophyta</taxon>
        <taxon>Tracheophyta</taxon>
        <taxon>Spermatophyta</taxon>
        <taxon>Magnoliopsida</taxon>
        <taxon>eudicotyledons</taxon>
        <taxon>Gunneridae</taxon>
        <taxon>Pentapetalae</taxon>
        <taxon>rosids</taxon>
        <taxon>malvids</taxon>
        <taxon>Brassicales</taxon>
        <taxon>Brassicaceae</taxon>
        <taxon>Camelineae</taxon>
        <taxon>Arabidopsis</taxon>
    </lineage>
</organism>
<comment type="function">
    <text evidence="4">Cleaves the polyglutamate sidechains of folate polyglutamates in the vacuole. Is important for polyglutamyl tail length determination before vacuolar exit. Plays a role in folate stability and intracellular folate content.</text>
</comment>
<comment type="catalytic activity">
    <reaction>
        <text>(6S)-5,6,7,8-tetrahydrofolyl-(gamma-L-Glu)(n) + (n-1) H2O = (6S)-5,6,7,8-tetrahydrofolate + (n-1) L-glutamate</text>
        <dbReference type="Rhea" id="RHEA:56784"/>
        <dbReference type="Rhea" id="RHEA-COMP:14738"/>
        <dbReference type="ChEBI" id="CHEBI:15377"/>
        <dbReference type="ChEBI" id="CHEBI:29985"/>
        <dbReference type="ChEBI" id="CHEBI:57453"/>
        <dbReference type="ChEBI" id="CHEBI:141005"/>
        <dbReference type="EC" id="3.4.19.9"/>
    </reaction>
</comment>
<comment type="subcellular location">
    <subcellularLocation>
        <location evidence="8">Vacuole</location>
    </subcellularLocation>
    <subcellularLocation>
        <location evidence="1">Secreted</location>
        <location evidence="1">Extracellular space</location>
    </subcellularLocation>
    <subcellularLocation>
        <location evidence="1">Secreted</location>
        <location evidence="1">Cell wall</location>
    </subcellularLocation>
    <text>Extracellular or cell-wall bound.</text>
</comment>
<comment type="alternative products">
    <event type="alternative splicing"/>
    <isoform>
        <id>Q9SYL6-1</id>
        <name>1</name>
        <sequence type="displayed"/>
    </isoform>
    <isoform>
        <id>Q9SYL6-2</id>
        <name>2</name>
        <sequence type="described" ref="VSP_053262"/>
    </isoform>
</comment>
<comment type="tissue specificity">
    <text evidence="4">Highly expressed in roots and at lower levels in leaves, stems and siliques.</text>
</comment>
<comment type="disruption phenotype">
    <text evidence="4">No visible phenotype under normal growth conditions.</text>
</comment>
<comment type="similarity">
    <text evidence="7">Belongs to the peptidase C26 family.</text>
</comment>
<comment type="sequence caution" evidence="7">
    <conflict type="frameshift">
        <sequence resource="EMBL-CDS" id="AAL15332"/>
    </conflict>
</comment>
<reference key="1">
    <citation type="journal article" date="2000" name="Nature">
        <title>Sequence and analysis of chromosome 1 of the plant Arabidopsis thaliana.</title>
        <authorList>
            <person name="Theologis A."/>
            <person name="Ecker J.R."/>
            <person name="Palm C.J."/>
            <person name="Federspiel N.A."/>
            <person name="Kaul S."/>
            <person name="White O."/>
            <person name="Alonso J."/>
            <person name="Altafi H."/>
            <person name="Araujo R."/>
            <person name="Bowman C.L."/>
            <person name="Brooks S.Y."/>
            <person name="Buehler E."/>
            <person name="Chan A."/>
            <person name="Chao Q."/>
            <person name="Chen H."/>
            <person name="Cheuk R.F."/>
            <person name="Chin C.W."/>
            <person name="Chung M.K."/>
            <person name="Conn L."/>
            <person name="Conway A.B."/>
            <person name="Conway A.R."/>
            <person name="Creasy T.H."/>
            <person name="Dewar K."/>
            <person name="Dunn P."/>
            <person name="Etgu P."/>
            <person name="Feldblyum T.V."/>
            <person name="Feng J.-D."/>
            <person name="Fong B."/>
            <person name="Fujii C.Y."/>
            <person name="Gill J.E."/>
            <person name="Goldsmith A.D."/>
            <person name="Haas B."/>
            <person name="Hansen N.F."/>
            <person name="Hughes B."/>
            <person name="Huizar L."/>
            <person name="Hunter J.L."/>
            <person name="Jenkins J."/>
            <person name="Johnson-Hopson C."/>
            <person name="Khan S."/>
            <person name="Khaykin E."/>
            <person name="Kim C.J."/>
            <person name="Koo H.L."/>
            <person name="Kremenetskaia I."/>
            <person name="Kurtz D.B."/>
            <person name="Kwan A."/>
            <person name="Lam B."/>
            <person name="Langin-Hooper S."/>
            <person name="Lee A."/>
            <person name="Lee J.M."/>
            <person name="Lenz C.A."/>
            <person name="Li J.H."/>
            <person name="Li Y.-P."/>
            <person name="Lin X."/>
            <person name="Liu S.X."/>
            <person name="Liu Z.A."/>
            <person name="Luros J.S."/>
            <person name="Maiti R."/>
            <person name="Marziali A."/>
            <person name="Militscher J."/>
            <person name="Miranda M."/>
            <person name="Nguyen M."/>
            <person name="Nierman W.C."/>
            <person name="Osborne B.I."/>
            <person name="Pai G."/>
            <person name="Peterson J."/>
            <person name="Pham P.K."/>
            <person name="Rizzo M."/>
            <person name="Rooney T."/>
            <person name="Rowley D."/>
            <person name="Sakano H."/>
            <person name="Salzberg S.L."/>
            <person name="Schwartz J.R."/>
            <person name="Shinn P."/>
            <person name="Southwick A.M."/>
            <person name="Sun H."/>
            <person name="Tallon L.J."/>
            <person name="Tambunga G."/>
            <person name="Toriumi M.J."/>
            <person name="Town C.D."/>
            <person name="Utterback T."/>
            <person name="Van Aken S."/>
            <person name="Vaysberg M."/>
            <person name="Vysotskaia V.S."/>
            <person name="Walker M."/>
            <person name="Wu D."/>
            <person name="Yu G."/>
            <person name="Fraser C.M."/>
            <person name="Venter J.C."/>
            <person name="Davis R.W."/>
        </authorList>
    </citation>
    <scope>NUCLEOTIDE SEQUENCE [LARGE SCALE GENOMIC DNA]</scope>
    <source>
        <strain>cv. Columbia</strain>
    </source>
</reference>
<reference key="2">
    <citation type="journal article" date="2017" name="Plant J.">
        <title>Araport11: a complete reannotation of the Arabidopsis thaliana reference genome.</title>
        <authorList>
            <person name="Cheng C.Y."/>
            <person name="Krishnakumar V."/>
            <person name="Chan A.P."/>
            <person name="Thibaud-Nissen F."/>
            <person name="Schobel S."/>
            <person name="Town C.D."/>
        </authorList>
    </citation>
    <scope>GENOME REANNOTATION</scope>
    <source>
        <strain>cv. Columbia</strain>
    </source>
</reference>
<reference key="3">
    <citation type="journal article" date="2003" name="Science">
        <title>Empirical analysis of transcriptional activity in the Arabidopsis genome.</title>
        <authorList>
            <person name="Yamada K."/>
            <person name="Lim J."/>
            <person name="Dale J.M."/>
            <person name="Chen H."/>
            <person name="Shinn P."/>
            <person name="Palm C.J."/>
            <person name="Southwick A.M."/>
            <person name="Wu H.C."/>
            <person name="Kim C.J."/>
            <person name="Nguyen M."/>
            <person name="Pham P.K."/>
            <person name="Cheuk R.F."/>
            <person name="Karlin-Newmann G."/>
            <person name="Liu S.X."/>
            <person name="Lam B."/>
            <person name="Sakano H."/>
            <person name="Wu T."/>
            <person name="Yu G."/>
            <person name="Miranda M."/>
            <person name="Quach H.L."/>
            <person name="Tripp M."/>
            <person name="Chang C.H."/>
            <person name="Lee J.M."/>
            <person name="Toriumi M.J."/>
            <person name="Chan M.M."/>
            <person name="Tang C.C."/>
            <person name="Onodera C.S."/>
            <person name="Deng J.M."/>
            <person name="Akiyama K."/>
            <person name="Ansari Y."/>
            <person name="Arakawa T."/>
            <person name="Banh J."/>
            <person name="Banno F."/>
            <person name="Bowser L."/>
            <person name="Brooks S.Y."/>
            <person name="Carninci P."/>
            <person name="Chao Q."/>
            <person name="Choy N."/>
            <person name="Enju A."/>
            <person name="Goldsmith A.D."/>
            <person name="Gurjal M."/>
            <person name="Hansen N.F."/>
            <person name="Hayashizaki Y."/>
            <person name="Johnson-Hopson C."/>
            <person name="Hsuan V.W."/>
            <person name="Iida K."/>
            <person name="Karnes M."/>
            <person name="Khan S."/>
            <person name="Koesema E."/>
            <person name="Ishida J."/>
            <person name="Jiang P.X."/>
            <person name="Jones T."/>
            <person name="Kawai J."/>
            <person name="Kamiya A."/>
            <person name="Meyers C."/>
            <person name="Nakajima M."/>
            <person name="Narusaka M."/>
            <person name="Seki M."/>
            <person name="Sakurai T."/>
            <person name="Satou M."/>
            <person name="Tamse R."/>
            <person name="Vaysberg M."/>
            <person name="Wallender E.K."/>
            <person name="Wong C."/>
            <person name="Yamamura Y."/>
            <person name="Yuan S."/>
            <person name="Shinozaki K."/>
            <person name="Davis R.W."/>
            <person name="Theologis A."/>
            <person name="Ecker J.R."/>
        </authorList>
    </citation>
    <scope>NUCLEOTIDE SEQUENCE [LARGE SCALE MRNA] (ISOFORM 1)</scope>
    <source>
        <strain>cv. Columbia</strain>
    </source>
</reference>
<reference key="4">
    <citation type="journal article" date="2009" name="DNA Res.">
        <title>Analysis of multiple occurrences of alternative splicing events in Arabidopsis thaliana using novel sequenced full-length cDNAs.</title>
        <authorList>
            <person name="Iida K."/>
            <person name="Fukami-Kobayashi K."/>
            <person name="Toyoda A."/>
            <person name="Sakaki Y."/>
            <person name="Kobayashi M."/>
            <person name="Seki M."/>
            <person name="Shinozaki K."/>
        </authorList>
    </citation>
    <scope>NUCLEOTIDE SEQUENCE [LARGE SCALE MRNA] (ISOFORM 2)</scope>
    <source>
        <strain>cv. Columbia</strain>
        <tissue>Rosette leaf</tissue>
    </source>
</reference>
<reference key="5">
    <citation type="submission" date="2006-03" db="EMBL/GenBank/DDBJ databases">
        <title>Arabidopsis ORF clones.</title>
        <authorList>
            <person name="Shinn P."/>
            <person name="Chen H."/>
            <person name="Kim C.J."/>
            <person name="Ecker J.R."/>
        </authorList>
    </citation>
    <scope>NUCLEOTIDE SEQUENCE [LARGE SCALE MRNA] (ISOFORM 2)</scope>
</reference>
<reference key="6">
    <citation type="journal article" date="2010" name="Plant J.">
        <title>A central role for gamma-glutamyl hydrolases in plant folate homeostasis.</title>
        <authorList>
            <person name="Akhtar T.A."/>
            <person name="Orsomando G."/>
            <person name="Mehrshahi P."/>
            <person name="Lara-Nunez A."/>
            <person name="Bennett M.J."/>
            <person name="Gregory J.F. III"/>
            <person name="Hanson A.D."/>
        </authorList>
    </citation>
    <scope>FUNCTION</scope>
    <scope>SUBCELLULAR LOCATION</scope>
    <scope>TISSUE SPECIFICITY</scope>
    <scope>DISRUPTION PHENOTYPE</scope>
</reference>
<sequence length="348" mass="39057">MIDNNCLYKEELNRNSYSGLAKEASESILLPSESGFDGSRSPVCSSPDPNLNYRPVIGILSHPGDGASGRLTNDTSSTYIAASYVKFAEAGGARVIPLIYNEPEEVLFQKLELVNGVIFTGGWAKKYDYFEIVKKIFTKALERNDAGEHFPVYGICLGFELMSIIISQNRDILERFDAEDNASSLQFVDNVNNDGTLFQRFPPELLKKLSTDCLVMQKHKYGITPANFQANPALSSFFEILTTCIDENSKTYVSTVKAKRYPITGFQWHPEKNAFEWGSSAIPHSEDAIQVTQHAASYLVSEARKSLNRPESQKVLSNLIYNYKPTYCGYAGRGYDEVYIFTQPRSRF</sequence>
<dbReference type="EC" id="3.4.19.9"/>
<dbReference type="EMBL" id="AC007260">
    <property type="protein sequence ID" value="AAD30570.1"/>
    <property type="molecule type" value="Genomic_DNA"/>
</dbReference>
<dbReference type="EMBL" id="CP002684">
    <property type="protein sequence ID" value="AEE36133.1"/>
    <property type="molecule type" value="Genomic_DNA"/>
</dbReference>
<dbReference type="EMBL" id="CP002684">
    <property type="protein sequence ID" value="AEE36134.1"/>
    <property type="molecule type" value="Genomic_DNA"/>
</dbReference>
<dbReference type="EMBL" id="CP002684">
    <property type="protein sequence ID" value="AEE36135.1"/>
    <property type="molecule type" value="Genomic_DNA"/>
</dbReference>
<dbReference type="EMBL" id="AY057702">
    <property type="protein sequence ID" value="AAL15332.1"/>
    <property type="status" value="ALT_FRAME"/>
    <property type="molecule type" value="mRNA"/>
</dbReference>
<dbReference type="EMBL" id="AK317198">
    <property type="protein sequence ID" value="BAH19882.1"/>
    <property type="molecule type" value="mRNA"/>
</dbReference>
<dbReference type="EMBL" id="BT024737">
    <property type="protein sequence ID" value="ABD59075.1"/>
    <property type="molecule type" value="mRNA"/>
</dbReference>
<dbReference type="PIR" id="D96815">
    <property type="entry name" value="D96815"/>
</dbReference>
<dbReference type="RefSeq" id="NP_177987.1">
    <molecule id="Q9SYL6-1"/>
    <property type="nucleotide sequence ID" value="NM_106513.5"/>
</dbReference>
<dbReference type="RefSeq" id="NP_849900.1">
    <molecule id="Q9SYL6-2"/>
    <property type="nucleotide sequence ID" value="NM_179569.4"/>
</dbReference>
<dbReference type="RefSeq" id="NP_974172.1">
    <molecule id="Q9SYL6-1"/>
    <property type="nucleotide sequence ID" value="NM_202443.3"/>
</dbReference>
<dbReference type="SMR" id="Q9SYL6"/>
<dbReference type="FunCoup" id="Q9SYL6">
    <property type="interactions" value="1296"/>
</dbReference>
<dbReference type="STRING" id="3702.Q9SYL6"/>
<dbReference type="MEROPS" id="C26.002"/>
<dbReference type="iPTMnet" id="Q9SYL6"/>
<dbReference type="PaxDb" id="3702-AT1G78660.3"/>
<dbReference type="ProteomicsDB" id="221835">
    <molecule id="Q9SYL6-1"/>
</dbReference>
<dbReference type="EnsemblPlants" id="AT1G78660.1">
    <molecule id="Q9SYL6-1"/>
    <property type="protein sequence ID" value="AT1G78660.1"/>
    <property type="gene ID" value="AT1G78660"/>
</dbReference>
<dbReference type="EnsemblPlants" id="AT1G78660.2">
    <molecule id="Q9SYL6-2"/>
    <property type="protein sequence ID" value="AT1G78660.2"/>
    <property type="gene ID" value="AT1G78660"/>
</dbReference>
<dbReference type="EnsemblPlants" id="AT1G78660.3">
    <molecule id="Q9SYL6-1"/>
    <property type="protein sequence ID" value="AT1G78660.3"/>
    <property type="gene ID" value="AT1G78660"/>
</dbReference>
<dbReference type="GeneID" id="844202"/>
<dbReference type="Gramene" id="AT1G78660.1">
    <molecule id="Q9SYL6-1"/>
    <property type="protein sequence ID" value="AT1G78660.1"/>
    <property type="gene ID" value="AT1G78660"/>
</dbReference>
<dbReference type="Gramene" id="AT1G78660.2">
    <molecule id="Q9SYL6-2"/>
    <property type="protein sequence ID" value="AT1G78660.2"/>
    <property type="gene ID" value="AT1G78660"/>
</dbReference>
<dbReference type="Gramene" id="AT1G78660.3">
    <molecule id="Q9SYL6-1"/>
    <property type="protein sequence ID" value="AT1G78660.3"/>
    <property type="gene ID" value="AT1G78660"/>
</dbReference>
<dbReference type="KEGG" id="ath:AT1G78660"/>
<dbReference type="Araport" id="AT1G78660"/>
<dbReference type="TAIR" id="AT1G78660">
    <property type="gene designation" value="GGH1"/>
</dbReference>
<dbReference type="eggNOG" id="KOG1559">
    <property type="taxonomic scope" value="Eukaryota"/>
</dbReference>
<dbReference type="InParanoid" id="Q9SYL6"/>
<dbReference type="OMA" id="CHEDIDH"/>
<dbReference type="OrthoDB" id="64220at2759"/>
<dbReference type="PhylomeDB" id="Q9SYL6"/>
<dbReference type="PRO" id="PR:Q9SYL6"/>
<dbReference type="Proteomes" id="UP000006548">
    <property type="component" value="Chromosome 1"/>
</dbReference>
<dbReference type="ExpressionAtlas" id="Q9SYL6">
    <property type="expression patterns" value="baseline and differential"/>
</dbReference>
<dbReference type="GO" id="GO:0005576">
    <property type="term" value="C:extracellular region"/>
    <property type="evidence" value="ECO:0007669"/>
    <property type="project" value="UniProtKB-SubCell"/>
</dbReference>
<dbReference type="GO" id="GO:0005773">
    <property type="term" value="C:vacuole"/>
    <property type="evidence" value="ECO:0000314"/>
    <property type="project" value="TAIR"/>
</dbReference>
<dbReference type="GO" id="GO:0034722">
    <property type="term" value="F:gamma-glutamyl-peptidase activity"/>
    <property type="evidence" value="ECO:0007669"/>
    <property type="project" value="UniProtKB-EC"/>
</dbReference>
<dbReference type="GO" id="GO:0008242">
    <property type="term" value="F:omega peptidase activity"/>
    <property type="evidence" value="ECO:0000314"/>
    <property type="project" value="TAIR"/>
</dbReference>
<dbReference type="GO" id="GO:0046900">
    <property type="term" value="P:tetrahydrofolylpolyglutamate metabolic process"/>
    <property type="evidence" value="ECO:0000314"/>
    <property type="project" value="TAIR"/>
</dbReference>
<dbReference type="FunFam" id="3.40.50.880:FF:000024">
    <property type="entry name" value="Folate gamma-glutamyl hydrolase"/>
    <property type="match status" value="1"/>
</dbReference>
<dbReference type="Gene3D" id="3.40.50.880">
    <property type="match status" value="1"/>
</dbReference>
<dbReference type="InterPro" id="IPR029062">
    <property type="entry name" value="Class_I_gatase-like"/>
</dbReference>
<dbReference type="InterPro" id="IPR015527">
    <property type="entry name" value="Pept_C26_g-glut_hydrolase"/>
</dbReference>
<dbReference type="InterPro" id="IPR011697">
    <property type="entry name" value="Peptidase_C26"/>
</dbReference>
<dbReference type="PANTHER" id="PTHR11315:SF15">
    <property type="entry name" value="GAMMA-GLUTAMYL HYDROLASE 1"/>
    <property type="match status" value="1"/>
</dbReference>
<dbReference type="PANTHER" id="PTHR11315">
    <property type="entry name" value="PROTEASE FAMILY C26 GAMMA-GLUTAMYL HYDROLASE"/>
    <property type="match status" value="1"/>
</dbReference>
<dbReference type="Pfam" id="PF07722">
    <property type="entry name" value="Peptidase_C26"/>
    <property type="match status" value="1"/>
</dbReference>
<dbReference type="SUPFAM" id="SSF52317">
    <property type="entry name" value="Class I glutamine amidotransferase-like"/>
    <property type="match status" value="1"/>
</dbReference>
<dbReference type="PROSITE" id="PS51275">
    <property type="entry name" value="PEPTIDASE_C26_GGH"/>
    <property type="match status" value="1"/>
</dbReference>
<protein>
    <recommendedName>
        <fullName>Gamma-glutamyl hydrolase 1</fullName>
        <shortName>AtGGH1</shortName>
        <ecNumber>3.4.19.9</ecNumber>
    </recommendedName>
    <alternativeName>
        <fullName>Conjugase</fullName>
    </alternativeName>
    <alternativeName>
        <fullName>GH</fullName>
    </alternativeName>
    <alternativeName>
        <fullName>Gamma-Glu-X carboxypeptidase</fullName>
    </alternativeName>
</protein>
<gene>
    <name type="primary">GGH1</name>
    <name type="ordered locus">At1g78660</name>
    <name type="ORF">T30F21.1</name>
</gene>
<accession>Q9SYL6</accession>
<accession>Q29Q19</accession>
<accession>Q93Z97</accession>